<protein>
    <recommendedName>
        <fullName>Protein lifeguard 1</fullName>
    </recommendedName>
    <alternativeName>
        <fullName>Glutamate [NMDA] receptor-associated protein 1</fullName>
    </alternativeName>
    <alternativeName>
        <fullName>NMDA receptor glutamate-binding subunit</fullName>
    </alternativeName>
</protein>
<accession>Q32L53</accession>
<evidence type="ECO:0000250" key="1"/>
<evidence type="ECO:0000255" key="2"/>
<evidence type="ECO:0000256" key="3">
    <source>
        <dbReference type="SAM" id="MobiDB-lite"/>
    </source>
</evidence>
<evidence type="ECO:0000305" key="4"/>
<keyword id="KW-0472">Membrane</keyword>
<keyword id="KW-1185">Reference proteome</keyword>
<keyword id="KW-0812">Transmembrane</keyword>
<keyword id="KW-1133">Transmembrane helix</keyword>
<reference key="1">
    <citation type="submission" date="2005-11" db="EMBL/GenBank/DDBJ databases">
        <authorList>
            <consortium name="NIH - Mammalian Gene Collection (MGC) project"/>
        </authorList>
    </citation>
    <scope>NUCLEOTIDE SEQUENCE [LARGE SCALE MRNA]</scope>
    <source>
        <strain>Crossbred X Angus</strain>
        <tissue>Liver</tissue>
    </source>
</reference>
<proteinExistence type="evidence at transcript level"/>
<feature type="chain" id="PRO_0000314438" description="Protein lifeguard 1">
    <location>
        <begin position="1"/>
        <end position="366"/>
    </location>
</feature>
<feature type="transmembrane region" description="Helical" evidence="2">
    <location>
        <begin position="160"/>
        <end position="180"/>
    </location>
</feature>
<feature type="transmembrane region" description="Helical" evidence="2">
    <location>
        <begin position="192"/>
        <end position="212"/>
    </location>
</feature>
<feature type="transmembrane region" description="Helical" evidence="2">
    <location>
        <begin position="223"/>
        <end position="243"/>
    </location>
</feature>
<feature type="transmembrane region" description="Helical" evidence="2">
    <location>
        <begin position="248"/>
        <end position="268"/>
    </location>
</feature>
<feature type="transmembrane region" description="Helical" evidence="2">
    <location>
        <begin position="278"/>
        <end position="298"/>
    </location>
</feature>
<feature type="transmembrane region" description="Helical" evidence="2">
    <location>
        <begin position="302"/>
        <end position="322"/>
    </location>
</feature>
<feature type="transmembrane region" description="Helical" evidence="2">
    <location>
        <begin position="341"/>
        <end position="361"/>
    </location>
</feature>
<feature type="region of interest" description="Disordered" evidence="3">
    <location>
        <begin position="1"/>
        <end position="141"/>
    </location>
</feature>
<feature type="compositionally biased region" description="Pro residues" evidence="3">
    <location>
        <begin position="14"/>
        <end position="44"/>
    </location>
</feature>
<feature type="compositionally biased region" description="Pro residues" evidence="3">
    <location>
        <begin position="67"/>
        <end position="109"/>
    </location>
</feature>
<sequence>MSHEKSFLVSGDSYPPPNPGYPGGPQPSMAPYPGAPYPQAPFQPSPYGQPGYPQGPSPYPQGGYPQGPYPPGGYPQGPYPPGGYPQGPYPPGGYPQGPYPQSPFPPNPYGQPQAFPAQDPGSPHHGNYHEEGPPSYYDNQDFPATNWDDKSIRQAFIRKVFLVLTLQLSVTLSTVAVFTFVGEVKGFVRENVWTYYVSYAIFFVSLIVLSCCGDFRRKHPWNLVALSILTVSLSYMVGMIASFYNTEAVIMAVGITTTVCFTVVIFSMQTRYDFTSCVGVLLVSVVVLILFAILCIFIRSRVLEIVYASLGALLFTCFLAVDTQLLLGNKQLSLSPEEYVFAALNLYTDIINIFLYILTIIGRAKE</sequence>
<comment type="function">
    <text evidence="1">Potential apoptotic regulator.</text>
</comment>
<comment type="subcellular location">
    <subcellularLocation>
        <location evidence="4">Membrane</location>
        <topology evidence="4">Multi-pass membrane protein</topology>
    </subcellularLocation>
</comment>
<comment type="similarity">
    <text evidence="4">Belongs to the BI1 family. LFG subfamily.</text>
</comment>
<organism>
    <name type="scientific">Bos taurus</name>
    <name type="common">Bovine</name>
    <dbReference type="NCBI Taxonomy" id="9913"/>
    <lineage>
        <taxon>Eukaryota</taxon>
        <taxon>Metazoa</taxon>
        <taxon>Chordata</taxon>
        <taxon>Craniata</taxon>
        <taxon>Vertebrata</taxon>
        <taxon>Euteleostomi</taxon>
        <taxon>Mammalia</taxon>
        <taxon>Eutheria</taxon>
        <taxon>Laurasiatheria</taxon>
        <taxon>Artiodactyla</taxon>
        <taxon>Ruminantia</taxon>
        <taxon>Pecora</taxon>
        <taxon>Bovidae</taxon>
        <taxon>Bovinae</taxon>
        <taxon>Bos</taxon>
    </lineage>
</organism>
<name>LFG1_BOVIN</name>
<dbReference type="EMBL" id="BC109761">
    <property type="protein sequence ID" value="AAI09762.1"/>
    <property type="molecule type" value="mRNA"/>
</dbReference>
<dbReference type="RefSeq" id="NP_001032682.1">
    <property type="nucleotide sequence ID" value="NM_001037593.1"/>
</dbReference>
<dbReference type="FunCoup" id="Q32L53">
    <property type="interactions" value="519"/>
</dbReference>
<dbReference type="STRING" id="9913.ENSBTAP00000062106"/>
<dbReference type="BindingDB" id="Q32L53"/>
<dbReference type="PaxDb" id="9913-ENSBTAP00000000410"/>
<dbReference type="Ensembl" id="ENSBTAT00000000410.7">
    <property type="protein sequence ID" value="ENSBTAP00000000410.5"/>
    <property type="gene ID" value="ENSBTAG00000000312.7"/>
</dbReference>
<dbReference type="GeneID" id="510225"/>
<dbReference type="KEGG" id="bta:510225"/>
<dbReference type="CTD" id="2907"/>
<dbReference type="VEuPathDB" id="HostDB:ENSBTAG00000000312"/>
<dbReference type="VGNC" id="VGNC:29651">
    <property type="gene designation" value="GRINA"/>
</dbReference>
<dbReference type="eggNOG" id="KOG2322">
    <property type="taxonomic scope" value="Eukaryota"/>
</dbReference>
<dbReference type="GeneTree" id="ENSGT01050000244890"/>
<dbReference type="HOGENOM" id="CLU_058671_3_0_1"/>
<dbReference type="InParanoid" id="Q32L53"/>
<dbReference type="OMA" id="YYVSYAF"/>
<dbReference type="OrthoDB" id="6133115at2759"/>
<dbReference type="TreeFam" id="TF319996"/>
<dbReference type="Proteomes" id="UP000009136">
    <property type="component" value="Chromosome 14"/>
</dbReference>
<dbReference type="Bgee" id="ENSBTAG00000000312">
    <property type="expression patterns" value="Expressed in retina and 104 other cell types or tissues"/>
</dbReference>
<dbReference type="GO" id="GO:0005783">
    <property type="term" value="C:endoplasmic reticulum"/>
    <property type="evidence" value="ECO:0000318"/>
    <property type="project" value="GO_Central"/>
</dbReference>
<dbReference type="GO" id="GO:0005794">
    <property type="term" value="C:Golgi apparatus"/>
    <property type="evidence" value="ECO:0000318"/>
    <property type="project" value="GO_Central"/>
</dbReference>
<dbReference type="GO" id="GO:0016020">
    <property type="term" value="C:membrane"/>
    <property type="evidence" value="ECO:0000318"/>
    <property type="project" value="GO_Central"/>
</dbReference>
<dbReference type="GO" id="GO:0005262">
    <property type="term" value="F:calcium channel activity"/>
    <property type="evidence" value="ECO:0000318"/>
    <property type="project" value="GO_Central"/>
</dbReference>
<dbReference type="GO" id="GO:0097190">
    <property type="term" value="P:apoptotic signaling pathway"/>
    <property type="evidence" value="ECO:0000318"/>
    <property type="project" value="GO_Central"/>
</dbReference>
<dbReference type="GO" id="GO:1902042">
    <property type="term" value="P:negative regulation of extrinsic apoptotic signaling pathway via death domain receptors"/>
    <property type="evidence" value="ECO:0000318"/>
    <property type="project" value="GO_Central"/>
</dbReference>
<dbReference type="GO" id="GO:0043524">
    <property type="term" value="P:negative regulation of neuron apoptotic process"/>
    <property type="evidence" value="ECO:0000318"/>
    <property type="project" value="GO_Central"/>
</dbReference>
<dbReference type="CDD" id="cd10428">
    <property type="entry name" value="LFG_like"/>
    <property type="match status" value="1"/>
</dbReference>
<dbReference type="InterPro" id="IPR006214">
    <property type="entry name" value="Bax_inhibitor_1-related"/>
</dbReference>
<dbReference type="PANTHER" id="PTHR23291">
    <property type="entry name" value="BAX INHIBITOR-RELATED"/>
    <property type="match status" value="1"/>
</dbReference>
<dbReference type="PANTHER" id="PTHR23291:SF16">
    <property type="entry name" value="PROTEIN LIFEGUARD 1"/>
    <property type="match status" value="1"/>
</dbReference>
<dbReference type="Pfam" id="PF01027">
    <property type="entry name" value="Bax1-I"/>
    <property type="match status" value="1"/>
</dbReference>
<gene>
    <name type="primary">GRINA</name>
    <name type="synonym">LFG1</name>
    <name type="synonym">NMDARA1</name>
</gene>